<proteinExistence type="inferred from homology"/>
<protein>
    <recommendedName>
        <fullName evidence="1">Arginine--tRNA ligase</fullName>
        <ecNumber evidence="1">6.1.1.19</ecNumber>
    </recommendedName>
    <alternativeName>
        <fullName evidence="1">Arginyl-tRNA synthetase</fullName>
        <shortName evidence="1">ArgRS</shortName>
    </alternativeName>
</protein>
<evidence type="ECO:0000255" key="1">
    <source>
        <dbReference type="HAMAP-Rule" id="MF_00123"/>
    </source>
</evidence>
<dbReference type="EC" id="6.1.1.19" evidence="1"/>
<dbReference type="EMBL" id="CP000958">
    <property type="protein sequence ID" value="ACA92092.1"/>
    <property type="molecule type" value="Genomic_DNA"/>
</dbReference>
<dbReference type="RefSeq" id="WP_006477662.1">
    <property type="nucleotide sequence ID" value="NC_010508.1"/>
</dbReference>
<dbReference type="SMR" id="B1JZC6"/>
<dbReference type="GeneID" id="83049714"/>
<dbReference type="KEGG" id="bcm:Bcenmc03_2934"/>
<dbReference type="HOGENOM" id="CLU_006406_0_1_4"/>
<dbReference type="Proteomes" id="UP000002169">
    <property type="component" value="Chromosome 1"/>
</dbReference>
<dbReference type="GO" id="GO:0005737">
    <property type="term" value="C:cytoplasm"/>
    <property type="evidence" value="ECO:0007669"/>
    <property type="project" value="UniProtKB-SubCell"/>
</dbReference>
<dbReference type="GO" id="GO:0004814">
    <property type="term" value="F:arginine-tRNA ligase activity"/>
    <property type="evidence" value="ECO:0007669"/>
    <property type="project" value="UniProtKB-UniRule"/>
</dbReference>
<dbReference type="GO" id="GO:0005524">
    <property type="term" value="F:ATP binding"/>
    <property type="evidence" value="ECO:0007669"/>
    <property type="project" value="UniProtKB-UniRule"/>
</dbReference>
<dbReference type="GO" id="GO:0006420">
    <property type="term" value="P:arginyl-tRNA aminoacylation"/>
    <property type="evidence" value="ECO:0007669"/>
    <property type="project" value="UniProtKB-UniRule"/>
</dbReference>
<dbReference type="CDD" id="cd00671">
    <property type="entry name" value="ArgRS_core"/>
    <property type="match status" value="1"/>
</dbReference>
<dbReference type="FunFam" id="1.10.730.10:FF:000008">
    <property type="entry name" value="Arginine--tRNA ligase"/>
    <property type="match status" value="1"/>
</dbReference>
<dbReference type="FunFam" id="3.40.50.620:FF:000062">
    <property type="entry name" value="Arginine--tRNA ligase"/>
    <property type="match status" value="1"/>
</dbReference>
<dbReference type="Gene3D" id="3.30.1360.70">
    <property type="entry name" value="Arginyl tRNA synthetase N-terminal domain"/>
    <property type="match status" value="1"/>
</dbReference>
<dbReference type="Gene3D" id="3.40.50.620">
    <property type="entry name" value="HUPs"/>
    <property type="match status" value="1"/>
</dbReference>
<dbReference type="Gene3D" id="1.10.730.10">
    <property type="entry name" value="Isoleucyl-tRNA Synthetase, Domain 1"/>
    <property type="match status" value="1"/>
</dbReference>
<dbReference type="HAMAP" id="MF_00123">
    <property type="entry name" value="Arg_tRNA_synth"/>
    <property type="match status" value="1"/>
</dbReference>
<dbReference type="InterPro" id="IPR001412">
    <property type="entry name" value="aa-tRNA-synth_I_CS"/>
</dbReference>
<dbReference type="InterPro" id="IPR001278">
    <property type="entry name" value="Arg-tRNA-ligase"/>
</dbReference>
<dbReference type="InterPro" id="IPR005148">
    <property type="entry name" value="Arg-tRNA-synth_N"/>
</dbReference>
<dbReference type="InterPro" id="IPR036695">
    <property type="entry name" value="Arg-tRNA-synth_N_sf"/>
</dbReference>
<dbReference type="InterPro" id="IPR035684">
    <property type="entry name" value="ArgRS_core"/>
</dbReference>
<dbReference type="InterPro" id="IPR008909">
    <property type="entry name" value="DALR_anticod-bd"/>
</dbReference>
<dbReference type="InterPro" id="IPR014729">
    <property type="entry name" value="Rossmann-like_a/b/a_fold"/>
</dbReference>
<dbReference type="InterPro" id="IPR009080">
    <property type="entry name" value="tRNAsynth_Ia_anticodon-bd"/>
</dbReference>
<dbReference type="NCBIfam" id="TIGR00456">
    <property type="entry name" value="argS"/>
    <property type="match status" value="1"/>
</dbReference>
<dbReference type="PANTHER" id="PTHR11956:SF5">
    <property type="entry name" value="ARGININE--TRNA LIGASE, CYTOPLASMIC"/>
    <property type="match status" value="1"/>
</dbReference>
<dbReference type="PANTHER" id="PTHR11956">
    <property type="entry name" value="ARGINYL-TRNA SYNTHETASE"/>
    <property type="match status" value="1"/>
</dbReference>
<dbReference type="Pfam" id="PF03485">
    <property type="entry name" value="Arg_tRNA_synt_N"/>
    <property type="match status" value="1"/>
</dbReference>
<dbReference type="Pfam" id="PF05746">
    <property type="entry name" value="DALR_1"/>
    <property type="match status" value="1"/>
</dbReference>
<dbReference type="Pfam" id="PF00750">
    <property type="entry name" value="tRNA-synt_1d"/>
    <property type="match status" value="1"/>
</dbReference>
<dbReference type="PRINTS" id="PR01038">
    <property type="entry name" value="TRNASYNTHARG"/>
</dbReference>
<dbReference type="SMART" id="SM01016">
    <property type="entry name" value="Arg_tRNA_synt_N"/>
    <property type="match status" value="1"/>
</dbReference>
<dbReference type="SMART" id="SM00836">
    <property type="entry name" value="DALR_1"/>
    <property type="match status" value="1"/>
</dbReference>
<dbReference type="SUPFAM" id="SSF47323">
    <property type="entry name" value="Anticodon-binding domain of a subclass of class I aminoacyl-tRNA synthetases"/>
    <property type="match status" value="1"/>
</dbReference>
<dbReference type="SUPFAM" id="SSF55190">
    <property type="entry name" value="Arginyl-tRNA synthetase (ArgRS), N-terminal 'additional' domain"/>
    <property type="match status" value="1"/>
</dbReference>
<dbReference type="SUPFAM" id="SSF52374">
    <property type="entry name" value="Nucleotidylyl transferase"/>
    <property type="match status" value="1"/>
</dbReference>
<dbReference type="PROSITE" id="PS00178">
    <property type="entry name" value="AA_TRNA_LIGASE_I"/>
    <property type="match status" value="1"/>
</dbReference>
<gene>
    <name evidence="1" type="primary">argS</name>
    <name type="ordered locus">Bcenmc03_2934</name>
</gene>
<accession>B1JZC6</accession>
<comment type="catalytic activity">
    <reaction evidence="1">
        <text>tRNA(Arg) + L-arginine + ATP = L-arginyl-tRNA(Arg) + AMP + diphosphate</text>
        <dbReference type="Rhea" id="RHEA:20301"/>
        <dbReference type="Rhea" id="RHEA-COMP:9658"/>
        <dbReference type="Rhea" id="RHEA-COMP:9673"/>
        <dbReference type="ChEBI" id="CHEBI:30616"/>
        <dbReference type="ChEBI" id="CHEBI:32682"/>
        <dbReference type="ChEBI" id="CHEBI:33019"/>
        <dbReference type="ChEBI" id="CHEBI:78442"/>
        <dbReference type="ChEBI" id="CHEBI:78513"/>
        <dbReference type="ChEBI" id="CHEBI:456215"/>
        <dbReference type="EC" id="6.1.1.19"/>
    </reaction>
</comment>
<comment type="subunit">
    <text evidence="1">Monomer.</text>
</comment>
<comment type="subcellular location">
    <subcellularLocation>
        <location evidence="1">Cytoplasm</location>
    </subcellularLocation>
</comment>
<comment type="similarity">
    <text evidence="1">Belongs to the class-I aminoacyl-tRNA synthetase family.</text>
</comment>
<organism>
    <name type="scientific">Burkholderia orbicola (strain MC0-3)</name>
    <dbReference type="NCBI Taxonomy" id="406425"/>
    <lineage>
        <taxon>Bacteria</taxon>
        <taxon>Pseudomonadati</taxon>
        <taxon>Pseudomonadota</taxon>
        <taxon>Betaproteobacteria</taxon>
        <taxon>Burkholderiales</taxon>
        <taxon>Burkholderiaceae</taxon>
        <taxon>Burkholderia</taxon>
        <taxon>Burkholderia cepacia complex</taxon>
        <taxon>Burkholderia orbicola</taxon>
    </lineage>
</organism>
<name>SYR_BURO0</name>
<keyword id="KW-0030">Aminoacyl-tRNA synthetase</keyword>
<keyword id="KW-0067">ATP-binding</keyword>
<keyword id="KW-0963">Cytoplasm</keyword>
<keyword id="KW-0436">Ligase</keyword>
<keyword id="KW-0547">Nucleotide-binding</keyword>
<keyword id="KW-0648">Protein biosynthesis</keyword>
<feature type="chain" id="PRO_1000095341" description="Arginine--tRNA ligase">
    <location>
        <begin position="1"/>
        <end position="593"/>
    </location>
</feature>
<feature type="short sequence motif" description="'HIGH' region">
    <location>
        <begin position="138"/>
        <end position="148"/>
    </location>
</feature>
<sequence length="593" mass="64242">MLPAHKQTLEALLADSVKQVAHALKGADAAFVAPAITLERPKVAAHGDVACNVAMQLAKPLGTNPRQLAEQIVAALTAQPAAQGLVEAAEIAGPGFINLRLSAAAKQAVIAAVFEQGRAFGTSDREKGKQVLLEFVSANPTGPLHVGHGRQAALGDVLANVIASQGYAVHREFYYNDAGVQIGNLAISTQARARGLKPGDAGWPEAAYNGEYIADIARDYLNGETVAASDGEPVKGTGDVEDLDAIRKFAVTYLRREQDMDLQAFGVKFDQYYLESSLYSEGRVEKTVDALVKAGMTYEQDGALWLRTTDEGDDKDRVMRKSDGTYTYFVPDVAYHVTKWERGFTKVINIQGSDHHGTIARVRAGLQGLHIGIPKGYPDYVLHKMVTVMRDGQEVKISKRAGSYVTVRDLIEWSGGAAAGQEAAPDLIDEATITRGRDAVRFFLISRKADTEFVFDIDLALKQNDENPVYYVQYAHARICSVLNELKSRYNVDVAQLPGADLSQLTSAQAASLMQKLAEYPDMLTHAANELAPHAVAFYLRDLAGEFHSFYNAERVLVDDEAPRNARAALLAATRQVLENGLAVLGVSAPAKM</sequence>
<reference key="1">
    <citation type="submission" date="2008-02" db="EMBL/GenBank/DDBJ databases">
        <title>Complete sequence of chromosome 1 of Burkholderia cenocepacia MC0-3.</title>
        <authorList>
            <person name="Copeland A."/>
            <person name="Lucas S."/>
            <person name="Lapidus A."/>
            <person name="Barry K."/>
            <person name="Bruce D."/>
            <person name="Goodwin L."/>
            <person name="Glavina del Rio T."/>
            <person name="Dalin E."/>
            <person name="Tice H."/>
            <person name="Pitluck S."/>
            <person name="Chain P."/>
            <person name="Malfatti S."/>
            <person name="Shin M."/>
            <person name="Vergez L."/>
            <person name="Schmutz J."/>
            <person name="Larimer F."/>
            <person name="Land M."/>
            <person name="Hauser L."/>
            <person name="Kyrpides N."/>
            <person name="Mikhailova N."/>
            <person name="Tiedje J."/>
            <person name="Richardson P."/>
        </authorList>
    </citation>
    <scope>NUCLEOTIDE SEQUENCE [LARGE SCALE GENOMIC DNA]</scope>
    <source>
        <strain>MC0-3</strain>
    </source>
</reference>